<dbReference type="EMBL" id="CP000628">
    <property type="protein sequence ID" value="ACM26412.1"/>
    <property type="molecule type" value="Genomic_DNA"/>
</dbReference>
<dbReference type="RefSeq" id="WP_007690994.1">
    <property type="nucleotide sequence ID" value="NC_011985.1"/>
</dbReference>
<dbReference type="SMR" id="B9JEJ1"/>
<dbReference type="STRING" id="311403.Arad_2157"/>
<dbReference type="GeneID" id="86848309"/>
<dbReference type="KEGG" id="ara:Arad_2157"/>
<dbReference type="eggNOG" id="COG1489">
    <property type="taxonomic scope" value="Bacteria"/>
</dbReference>
<dbReference type="HOGENOM" id="CLU_052299_2_0_5"/>
<dbReference type="Proteomes" id="UP000001600">
    <property type="component" value="Chromosome 1"/>
</dbReference>
<dbReference type="GO" id="GO:0003677">
    <property type="term" value="F:DNA binding"/>
    <property type="evidence" value="ECO:0007669"/>
    <property type="project" value="InterPro"/>
</dbReference>
<dbReference type="CDD" id="cd22359">
    <property type="entry name" value="SfsA-like_bacterial"/>
    <property type="match status" value="1"/>
</dbReference>
<dbReference type="Gene3D" id="2.40.50.580">
    <property type="match status" value="1"/>
</dbReference>
<dbReference type="Gene3D" id="3.40.1350.60">
    <property type="match status" value="1"/>
</dbReference>
<dbReference type="HAMAP" id="MF_00095">
    <property type="entry name" value="SfsA"/>
    <property type="match status" value="1"/>
</dbReference>
<dbReference type="InterPro" id="IPR005224">
    <property type="entry name" value="SfsA"/>
</dbReference>
<dbReference type="InterPro" id="IPR040452">
    <property type="entry name" value="SfsA_C"/>
</dbReference>
<dbReference type="InterPro" id="IPR041465">
    <property type="entry name" value="SfsA_N"/>
</dbReference>
<dbReference type="NCBIfam" id="TIGR00230">
    <property type="entry name" value="sfsA"/>
    <property type="match status" value="1"/>
</dbReference>
<dbReference type="PANTHER" id="PTHR30545">
    <property type="entry name" value="SUGAR FERMENTATION STIMULATION PROTEIN A"/>
    <property type="match status" value="1"/>
</dbReference>
<dbReference type="PANTHER" id="PTHR30545:SF2">
    <property type="entry name" value="SUGAR FERMENTATION STIMULATION PROTEIN A"/>
    <property type="match status" value="1"/>
</dbReference>
<dbReference type="Pfam" id="PF03749">
    <property type="entry name" value="SfsA"/>
    <property type="match status" value="1"/>
</dbReference>
<dbReference type="Pfam" id="PF17746">
    <property type="entry name" value="SfsA_N"/>
    <property type="match status" value="1"/>
</dbReference>
<accession>B9JEJ1</accession>
<reference key="1">
    <citation type="journal article" date="2009" name="J. Bacteriol.">
        <title>Genome sequences of three Agrobacterium biovars help elucidate the evolution of multichromosome genomes in bacteria.</title>
        <authorList>
            <person name="Slater S.C."/>
            <person name="Goldman B.S."/>
            <person name="Goodner B."/>
            <person name="Setubal J.C."/>
            <person name="Farrand S.K."/>
            <person name="Nester E.W."/>
            <person name="Burr T.J."/>
            <person name="Banta L."/>
            <person name="Dickerman A.W."/>
            <person name="Paulsen I."/>
            <person name="Otten L."/>
            <person name="Suen G."/>
            <person name="Welch R."/>
            <person name="Almeida N.F."/>
            <person name="Arnold F."/>
            <person name="Burton O.T."/>
            <person name="Du Z."/>
            <person name="Ewing A."/>
            <person name="Godsy E."/>
            <person name="Heisel S."/>
            <person name="Houmiel K.L."/>
            <person name="Jhaveri J."/>
            <person name="Lu J."/>
            <person name="Miller N.M."/>
            <person name="Norton S."/>
            <person name="Chen Q."/>
            <person name="Phoolcharoen W."/>
            <person name="Ohlin V."/>
            <person name="Ondrusek D."/>
            <person name="Pride N."/>
            <person name="Stricklin S.L."/>
            <person name="Sun J."/>
            <person name="Wheeler C."/>
            <person name="Wilson L."/>
            <person name="Zhu H."/>
            <person name="Wood D.W."/>
        </authorList>
    </citation>
    <scope>NUCLEOTIDE SEQUENCE [LARGE SCALE GENOMIC DNA]</scope>
    <source>
        <strain>K84 / ATCC BAA-868</strain>
    </source>
</reference>
<gene>
    <name evidence="1" type="primary">sfsA</name>
    <name type="ordered locus">Arad_2157</name>
</gene>
<organism>
    <name type="scientific">Rhizobium rhizogenes (strain K84 / ATCC BAA-868)</name>
    <name type="common">Agrobacterium radiobacter</name>
    <dbReference type="NCBI Taxonomy" id="311403"/>
    <lineage>
        <taxon>Bacteria</taxon>
        <taxon>Pseudomonadati</taxon>
        <taxon>Pseudomonadota</taxon>
        <taxon>Alphaproteobacteria</taxon>
        <taxon>Hyphomicrobiales</taxon>
        <taxon>Rhizobiaceae</taxon>
        <taxon>Rhizobium/Agrobacterium group</taxon>
        <taxon>Rhizobium</taxon>
    </lineage>
</organism>
<comment type="similarity">
    <text evidence="1">Belongs to the SfsA family.</text>
</comment>
<feature type="chain" id="PRO_1000196957" description="Sugar fermentation stimulation protein homolog">
    <location>
        <begin position="1"/>
        <end position="249"/>
    </location>
</feature>
<proteinExistence type="inferred from homology"/>
<sequence length="249" mass="27566">MLFNPPLVPARLIARYKRFLFDAELESGEIITGSCPNTGSMQGLTTPGSRIWLSEHEGAKRKYRHVFELIEADGTTVGVNTAMPNRTAAEAIALGQISDLGDYTTVRREQNYGRNSRIDLLLTDPLRTTTYVEVKNVHFMREPGLAEFPDTVTARGAKHLEELGDMADAGHRAVMLFVIQRHDCDRFRVCGDLDVVYATAFQRALKRGVEVYALKCRVSPTEITPAGLIPIDEPGIAALNTKYKISAEG</sequence>
<protein>
    <recommendedName>
        <fullName evidence="1">Sugar fermentation stimulation protein homolog</fullName>
    </recommendedName>
</protein>
<name>SFSA_RHIR8</name>
<evidence type="ECO:0000255" key="1">
    <source>
        <dbReference type="HAMAP-Rule" id="MF_00095"/>
    </source>
</evidence>